<evidence type="ECO:0000255" key="1">
    <source>
        <dbReference type="HAMAP-Rule" id="MF_00051"/>
    </source>
</evidence>
<evidence type="ECO:0000305" key="2"/>
<gene>
    <name evidence="1" type="primary">glyA</name>
    <name type="ordered locus">Xfasm12_1912</name>
</gene>
<reference key="1">
    <citation type="journal article" date="2010" name="J. Bacteriol.">
        <title>Whole genome sequences of two Xylella fastidiosa strains (M12 and M23) causing almond leaf scorch disease in California.</title>
        <authorList>
            <person name="Chen J."/>
            <person name="Xie G."/>
            <person name="Han S."/>
            <person name="Chertkov O."/>
            <person name="Sims D."/>
            <person name="Civerolo E.L."/>
        </authorList>
    </citation>
    <scope>NUCLEOTIDE SEQUENCE [LARGE SCALE GENOMIC DNA]</scope>
    <source>
        <strain>M12</strain>
    </source>
</reference>
<feature type="chain" id="PRO_0000369963" description="Serine hydroxymethyltransferase">
    <location>
        <begin position="1"/>
        <end position="417"/>
    </location>
</feature>
<feature type="binding site" evidence="1">
    <location>
        <position position="121"/>
    </location>
    <ligand>
        <name>(6S)-5,6,7,8-tetrahydrofolate</name>
        <dbReference type="ChEBI" id="CHEBI:57453"/>
    </ligand>
</feature>
<feature type="binding site" evidence="1">
    <location>
        <begin position="125"/>
        <end position="127"/>
    </location>
    <ligand>
        <name>(6S)-5,6,7,8-tetrahydrofolate</name>
        <dbReference type="ChEBI" id="CHEBI:57453"/>
    </ligand>
</feature>
<feature type="binding site" evidence="1">
    <location>
        <begin position="355"/>
        <end position="357"/>
    </location>
    <ligand>
        <name>(6S)-5,6,7,8-tetrahydrofolate</name>
        <dbReference type="ChEBI" id="CHEBI:57453"/>
    </ligand>
</feature>
<feature type="site" description="Plays an important role in substrate specificity" evidence="1">
    <location>
        <position position="228"/>
    </location>
</feature>
<feature type="modified residue" description="N6-(pyridoxal phosphate)lysine" evidence="1">
    <location>
        <position position="229"/>
    </location>
</feature>
<dbReference type="EC" id="2.1.2.1" evidence="1"/>
<dbReference type="EMBL" id="CP000941">
    <property type="protein sequence ID" value="ACA12788.1"/>
    <property type="status" value="ALT_INIT"/>
    <property type="molecule type" value="Genomic_DNA"/>
</dbReference>
<dbReference type="RefSeq" id="WP_027700513.1">
    <property type="nucleotide sequence ID" value="NC_010513.1"/>
</dbReference>
<dbReference type="SMR" id="B0U4K9"/>
<dbReference type="KEGG" id="xfm:Xfasm12_1912"/>
<dbReference type="HOGENOM" id="CLU_022477_2_1_6"/>
<dbReference type="UniPathway" id="UPA00193"/>
<dbReference type="UniPathway" id="UPA00288">
    <property type="reaction ID" value="UER01023"/>
</dbReference>
<dbReference type="GO" id="GO:0005829">
    <property type="term" value="C:cytosol"/>
    <property type="evidence" value="ECO:0007669"/>
    <property type="project" value="TreeGrafter"/>
</dbReference>
<dbReference type="GO" id="GO:0004372">
    <property type="term" value="F:glycine hydroxymethyltransferase activity"/>
    <property type="evidence" value="ECO:0007669"/>
    <property type="project" value="UniProtKB-UniRule"/>
</dbReference>
<dbReference type="GO" id="GO:0030170">
    <property type="term" value="F:pyridoxal phosphate binding"/>
    <property type="evidence" value="ECO:0007669"/>
    <property type="project" value="UniProtKB-UniRule"/>
</dbReference>
<dbReference type="GO" id="GO:0019264">
    <property type="term" value="P:glycine biosynthetic process from serine"/>
    <property type="evidence" value="ECO:0007669"/>
    <property type="project" value="UniProtKB-UniRule"/>
</dbReference>
<dbReference type="GO" id="GO:0035999">
    <property type="term" value="P:tetrahydrofolate interconversion"/>
    <property type="evidence" value="ECO:0007669"/>
    <property type="project" value="UniProtKB-UniRule"/>
</dbReference>
<dbReference type="CDD" id="cd00378">
    <property type="entry name" value="SHMT"/>
    <property type="match status" value="1"/>
</dbReference>
<dbReference type="FunFam" id="3.40.640.10:FF:000001">
    <property type="entry name" value="Serine hydroxymethyltransferase"/>
    <property type="match status" value="1"/>
</dbReference>
<dbReference type="FunFam" id="3.90.1150.10:FF:000003">
    <property type="entry name" value="Serine hydroxymethyltransferase"/>
    <property type="match status" value="1"/>
</dbReference>
<dbReference type="Gene3D" id="3.90.1150.10">
    <property type="entry name" value="Aspartate Aminotransferase, domain 1"/>
    <property type="match status" value="1"/>
</dbReference>
<dbReference type="Gene3D" id="3.40.640.10">
    <property type="entry name" value="Type I PLP-dependent aspartate aminotransferase-like (Major domain)"/>
    <property type="match status" value="1"/>
</dbReference>
<dbReference type="HAMAP" id="MF_00051">
    <property type="entry name" value="SHMT"/>
    <property type="match status" value="1"/>
</dbReference>
<dbReference type="InterPro" id="IPR015424">
    <property type="entry name" value="PyrdxlP-dep_Trfase"/>
</dbReference>
<dbReference type="InterPro" id="IPR015421">
    <property type="entry name" value="PyrdxlP-dep_Trfase_major"/>
</dbReference>
<dbReference type="InterPro" id="IPR015422">
    <property type="entry name" value="PyrdxlP-dep_Trfase_small"/>
</dbReference>
<dbReference type="InterPro" id="IPR001085">
    <property type="entry name" value="Ser_HO-MeTrfase"/>
</dbReference>
<dbReference type="InterPro" id="IPR049943">
    <property type="entry name" value="Ser_HO-MeTrfase-like"/>
</dbReference>
<dbReference type="InterPro" id="IPR019798">
    <property type="entry name" value="Ser_HO-MeTrfase_PLP_BS"/>
</dbReference>
<dbReference type="InterPro" id="IPR039429">
    <property type="entry name" value="SHMT-like_dom"/>
</dbReference>
<dbReference type="NCBIfam" id="NF000586">
    <property type="entry name" value="PRK00011.1"/>
    <property type="match status" value="1"/>
</dbReference>
<dbReference type="PANTHER" id="PTHR11680">
    <property type="entry name" value="SERINE HYDROXYMETHYLTRANSFERASE"/>
    <property type="match status" value="1"/>
</dbReference>
<dbReference type="PANTHER" id="PTHR11680:SF50">
    <property type="entry name" value="SERINE HYDROXYMETHYLTRANSFERASE"/>
    <property type="match status" value="1"/>
</dbReference>
<dbReference type="Pfam" id="PF00464">
    <property type="entry name" value="SHMT"/>
    <property type="match status" value="1"/>
</dbReference>
<dbReference type="PIRSF" id="PIRSF000412">
    <property type="entry name" value="SHMT"/>
    <property type="match status" value="1"/>
</dbReference>
<dbReference type="SUPFAM" id="SSF53383">
    <property type="entry name" value="PLP-dependent transferases"/>
    <property type="match status" value="1"/>
</dbReference>
<dbReference type="PROSITE" id="PS00096">
    <property type="entry name" value="SHMT"/>
    <property type="match status" value="1"/>
</dbReference>
<protein>
    <recommendedName>
        <fullName evidence="1">Serine hydroxymethyltransferase</fullName>
        <shortName evidence="1">SHMT</shortName>
        <shortName evidence="1">Serine methylase</shortName>
        <ecNumber evidence="1">2.1.2.1</ecNumber>
    </recommendedName>
</protein>
<proteinExistence type="inferred from homology"/>
<accession>B0U4K9</accession>
<comment type="function">
    <text evidence="1">Catalyzes the reversible interconversion of serine and glycine with tetrahydrofolate (THF) serving as the one-carbon carrier. This reaction serves as the major source of one-carbon groups required for the biosynthesis of purines, thymidylate, methionine, and other important biomolecules. Also exhibits THF-independent aldolase activity toward beta-hydroxyamino acids, producing glycine and aldehydes, via a retro-aldol mechanism.</text>
</comment>
<comment type="catalytic activity">
    <reaction evidence="1">
        <text>(6R)-5,10-methylene-5,6,7,8-tetrahydrofolate + glycine + H2O = (6S)-5,6,7,8-tetrahydrofolate + L-serine</text>
        <dbReference type="Rhea" id="RHEA:15481"/>
        <dbReference type="ChEBI" id="CHEBI:15377"/>
        <dbReference type="ChEBI" id="CHEBI:15636"/>
        <dbReference type="ChEBI" id="CHEBI:33384"/>
        <dbReference type="ChEBI" id="CHEBI:57305"/>
        <dbReference type="ChEBI" id="CHEBI:57453"/>
        <dbReference type="EC" id="2.1.2.1"/>
    </reaction>
</comment>
<comment type="cofactor">
    <cofactor evidence="1">
        <name>pyridoxal 5'-phosphate</name>
        <dbReference type="ChEBI" id="CHEBI:597326"/>
    </cofactor>
</comment>
<comment type="pathway">
    <text evidence="1">One-carbon metabolism; tetrahydrofolate interconversion.</text>
</comment>
<comment type="pathway">
    <text evidence="1">Amino-acid biosynthesis; glycine biosynthesis; glycine from L-serine: step 1/1.</text>
</comment>
<comment type="subunit">
    <text evidence="1">Homodimer.</text>
</comment>
<comment type="subcellular location">
    <subcellularLocation>
        <location evidence="1">Cytoplasm</location>
    </subcellularLocation>
</comment>
<comment type="similarity">
    <text evidence="1">Belongs to the SHMT family.</text>
</comment>
<comment type="sequence caution" evidence="2">
    <conflict type="erroneous initiation">
        <sequence resource="EMBL-CDS" id="ACA12788"/>
    </conflict>
</comment>
<keyword id="KW-0028">Amino-acid biosynthesis</keyword>
<keyword id="KW-0963">Cytoplasm</keyword>
<keyword id="KW-0554">One-carbon metabolism</keyword>
<keyword id="KW-0663">Pyridoxal phosphate</keyword>
<keyword id="KW-0808">Transferase</keyword>
<sequence>MFPRDARLDMYDPELAKAIAAEVRRQEDHVELIASENYCSTLVMQVQGSQLTNKYAEGYSGKRYYGGCEYVDIAEQLAIERAKQLFGADYANVQPHSGSQANQAVYFALLQPGDTILGMSLAHGGHLTHGANVNVSGKLFNAVQYGVNAQGLIDYEAVESLALEHRPKMVVAGFSAYSQKIDWVRFRAIADQVGAYLLVDMAHVAGLVAAGVYPNPLPHAHVVTSTTHKTLRGPRGGIIVAQAPQEALVKKLQSIVFPGIQGGPLMHVIAAKAVAFKEALEPAFKVYQQQVVKNAKAMAETLMLRGYKIVSGGTENHLMLVDMIGRDVSGRDAEGALGQAHITVNKNAVPDDPRSPFVTSGLRLGTPAVTTRGYQEQDCVDLAHWIADVLDAPADATVIAAVREKVAAQCKKYPVYR</sequence>
<organism>
    <name type="scientific">Xylella fastidiosa (strain M12)</name>
    <dbReference type="NCBI Taxonomy" id="405440"/>
    <lineage>
        <taxon>Bacteria</taxon>
        <taxon>Pseudomonadati</taxon>
        <taxon>Pseudomonadota</taxon>
        <taxon>Gammaproteobacteria</taxon>
        <taxon>Lysobacterales</taxon>
        <taxon>Lysobacteraceae</taxon>
        <taxon>Xylella</taxon>
    </lineage>
</organism>
<name>GLYA_XYLFM</name>